<organism>
    <name type="scientific">Polynucleobacter asymbioticus (strain DSM 18221 / CIP 109841 / QLW-P1DMWA-1)</name>
    <name type="common">Polynucleobacter necessarius subsp. asymbioticus</name>
    <dbReference type="NCBI Taxonomy" id="312153"/>
    <lineage>
        <taxon>Bacteria</taxon>
        <taxon>Pseudomonadati</taxon>
        <taxon>Pseudomonadota</taxon>
        <taxon>Betaproteobacteria</taxon>
        <taxon>Burkholderiales</taxon>
        <taxon>Burkholderiaceae</taxon>
        <taxon>Polynucleobacter</taxon>
    </lineage>
</organism>
<feature type="chain" id="PRO_1000087910" description="Bifunctional protein FolD">
    <location>
        <begin position="1"/>
        <end position="284"/>
    </location>
</feature>
<feature type="binding site" evidence="1">
    <location>
        <begin position="165"/>
        <end position="167"/>
    </location>
    <ligand>
        <name>NADP(+)</name>
        <dbReference type="ChEBI" id="CHEBI:58349"/>
    </ligand>
</feature>
<feature type="binding site" evidence="1">
    <location>
        <position position="190"/>
    </location>
    <ligand>
        <name>NADP(+)</name>
        <dbReference type="ChEBI" id="CHEBI:58349"/>
    </ligand>
</feature>
<feature type="binding site" evidence="1">
    <location>
        <position position="231"/>
    </location>
    <ligand>
        <name>NADP(+)</name>
        <dbReference type="ChEBI" id="CHEBI:58349"/>
    </ligand>
</feature>
<comment type="function">
    <text evidence="1">Catalyzes the oxidation of 5,10-methylenetetrahydrofolate to 5,10-methenyltetrahydrofolate and then the hydrolysis of 5,10-methenyltetrahydrofolate to 10-formyltetrahydrofolate.</text>
</comment>
<comment type="catalytic activity">
    <reaction evidence="1">
        <text>(6R)-5,10-methylene-5,6,7,8-tetrahydrofolate + NADP(+) = (6R)-5,10-methenyltetrahydrofolate + NADPH</text>
        <dbReference type="Rhea" id="RHEA:22812"/>
        <dbReference type="ChEBI" id="CHEBI:15636"/>
        <dbReference type="ChEBI" id="CHEBI:57455"/>
        <dbReference type="ChEBI" id="CHEBI:57783"/>
        <dbReference type="ChEBI" id="CHEBI:58349"/>
        <dbReference type="EC" id="1.5.1.5"/>
    </reaction>
</comment>
<comment type="catalytic activity">
    <reaction evidence="1">
        <text>(6R)-5,10-methenyltetrahydrofolate + H2O = (6R)-10-formyltetrahydrofolate + H(+)</text>
        <dbReference type="Rhea" id="RHEA:23700"/>
        <dbReference type="ChEBI" id="CHEBI:15377"/>
        <dbReference type="ChEBI" id="CHEBI:15378"/>
        <dbReference type="ChEBI" id="CHEBI:57455"/>
        <dbReference type="ChEBI" id="CHEBI:195366"/>
        <dbReference type="EC" id="3.5.4.9"/>
    </reaction>
</comment>
<comment type="pathway">
    <text evidence="1">One-carbon metabolism; tetrahydrofolate interconversion.</text>
</comment>
<comment type="subunit">
    <text evidence="1">Homodimer.</text>
</comment>
<comment type="similarity">
    <text evidence="1">Belongs to the tetrahydrofolate dehydrogenase/cyclohydrolase family.</text>
</comment>
<keyword id="KW-0028">Amino-acid biosynthesis</keyword>
<keyword id="KW-0368">Histidine biosynthesis</keyword>
<keyword id="KW-0378">Hydrolase</keyword>
<keyword id="KW-0486">Methionine biosynthesis</keyword>
<keyword id="KW-0511">Multifunctional enzyme</keyword>
<keyword id="KW-0521">NADP</keyword>
<keyword id="KW-0554">One-carbon metabolism</keyword>
<keyword id="KW-0560">Oxidoreductase</keyword>
<keyword id="KW-0658">Purine biosynthesis</keyword>
<keyword id="KW-1185">Reference proteome</keyword>
<gene>
    <name evidence="1" type="primary">folD</name>
    <name type="ordered locus">Pnuc_0731</name>
</gene>
<reference key="1">
    <citation type="journal article" date="2012" name="Stand. Genomic Sci.">
        <title>Complete genome sequence of Polynucleobacter necessarius subsp. asymbioticus type strain (QLW-P1DMWA-1(T)).</title>
        <authorList>
            <person name="Meincke L."/>
            <person name="Copeland A."/>
            <person name="Lapidus A."/>
            <person name="Lucas S."/>
            <person name="Berry K.W."/>
            <person name="Del Rio T.G."/>
            <person name="Hammon N."/>
            <person name="Dalin E."/>
            <person name="Tice H."/>
            <person name="Pitluck S."/>
            <person name="Richardson P."/>
            <person name="Bruce D."/>
            <person name="Goodwin L."/>
            <person name="Han C."/>
            <person name="Tapia R."/>
            <person name="Detter J.C."/>
            <person name="Schmutz J."/>
            <person name="Brettin T."/>
            <person name="Larimer F."/>
            <person name="Land M."/>
            <person name="Hauser L."/>
            <person name="Kyrpides N.C."/>
            <person name="Ivanova N."/>
            <person name="Goker M."/>
            <person name="Woyke T."/>
            <person name="Wu Q.L."/>
            <person name="Pockl M."/>
            <person name="Hahn M.W."/>
            <person name="Klenk H.P."/>
        </authorList>
    </citation>
    <scope>NUCLEOTIDE SEQUENCE [LARGE SCALE GENOMIC DNA]</scope>
    <source>
        <strain>DSM 18221 / CIP 109841 / QLW-P1DMWA-1</strain>
    </source>
</reference>
<sequence length="284" mass="29834">MPAQLLDGNALSKKLRAEIAARAAIVTAKGVRPGLAVIVVGDNPASQVYVRNKVKACEDVGFHSVLEPYPAELGEEELLARIATLNADPAIHGILVQLPLPEHIAAERVLEAIAPEKDVDGFHVSNAGALMVGKPEFIPCTPYGCMKLLESIEYPIRGARAVIVGASNIVGKPMAMLLLQAGATVTICNSKTRDLAHHTKDADILVVATGKPKMVSGDMIKNGAVVIDVGINRLPDGKLCGDVDFDAAKYVAGWITPVPGGVGPMTITMLLMNTLEAAEKASKP</sequence>
<protein>
    <recommendedName>
        <fullName evidence="1">Bifunctional protein FolD</fullName>
    </recommendedName>
    <domain>
        <recommendedName>
            <fullName evidence="1">Methylenetetrahydrofolate dehydrogenase</fullName>
            <ecNumber evidence="1">1.5.1.5</ecNumber>
        </recommendedName>
    </domain>
    <domain>
        <recommendedName>
            <fullName evidence="1">Methenyltetrahydrofolate cyclohydrolase</fullName>
            <ecNumber evidence="1">3.5.4.9</ecNumber>
        </recommendedName>
    </domain>
</protein>
<accession>A4SWT5</accession>
<proteinExistence type="inferred from homology"/>
<name>FOLD_POLAQ</name>
<evidence type="ECO:0000255" key="1">
    <source>
        <dbReference type="HAMAP-Rule" id="MF_01576"/>
    </source>
</evidence>
<dbReference type="EC" id="1.5.1.5" evidence="1"/>
<dbReference type="EC" id="3.5.4.9" evidence="1"/>
<dbReference type="EMBL" id="CP000655">
    <property type="protein sequence ID" value="ABP33949.1"/>
    <property type="molecule type" value="Genomic_DNA"/>
</dbReference>
<dbReference type="RefSeq" id="WP_011902574.1">
    <property type="nucleotide sequence ID" value="NC_009379.1"/>
</dbReference>
<dbReference type="SMR" id="A4SWT5"/>
<dbReference type="GeneID" id="31481092"/>
<dbReference type="KEGG" id="pnu:Pnuc_0731"/>
<dbReference type="eggNOG" id="COG0190">
    <property type="taxonomic scope" value="Bacteria"/>
</dbReference>
<dbReference type="HOGENOM" id="CLU_034045_2_1_4"/>
<dbReference type="UniPathway" id="UPA00193"/>
<dbReference type="Proteomes" id="UP000000231">
    <property type="component" value="Chromosome"/>
</dbReference>
<dbReference type="GO" id="GO:0005829">
    <property type="term" value="C:cytosol"/>
    <property type="evidence" value="ECO:0007669"/>
    <property type="project" value="TreeGrafter"/>
</dbReference>
<dbReference type="GO" id="GO:0004477">
    <property type="term" value="F:methenyltetrahydrofolate cyclohydrolase activity"/>
    <property type="evidence" value="ECO:0007669"/>
    <property type="project" value="UniProtKB-UniRule"/>
</dbReference>
<dbReference type="GO" id="GO:0004488">
    <property type="term" value="F:methylenetetrahydrofolate dehydrogenase (NADP+) activity"/>
    <property type="evidence" value="ECO:0007669"/>
    <property type="project" value="UniProtKB-UniRule"/>
</dbReference>
<dbReference type="GO" id="GO:0000105">
    <property type="term" value="P:L-histidine biosynthetic process"/>
    <property type="evidence" value="ECO:0007669"/>
    <property type="project" value="UniProtKB-KW"/>
</dbReference>
<dbReference type="GO" id="GO:0009086">
    <property type="term" value="P:methionine biosynthetic process"/>
    <property type="evidence" value="ECO:0007669"/>
    <property type="project" value="UniProtKB-KW"/>
</dbReference>
<dbReference type="GO" id="GO:0006164">
    <property type="term" value="P:purine nucleotide biosynthetic process"/>
    <property type="evidence" value="ECO:0007669"/>
    <property type="project" value="UniProtKB-KW"/>
</dbReference>
<dbReference type="GO" id="GO:0035999">
    <property type="term" value="P:tetrahydrofolate interconversion"/>
    <property type="evidence" value="ECO:0007669"/>
    <property type="project" value="UniProtKB-UniRule"/>
</dbReference>
<dbReference type="CDD" id="cd01080">
    <property type="entry name" value="NAD_bind_m-THF_DH_Cyclohyd"/>
    <property type="match status" value="1"/>
</dbReference>
<dbReference type="FunFam" id="3.40.50.720:FF:000094">
    <property type="entry name" value="Bifunctional protein FolD"/>
    <property type="match status" value="1"/>
</dbReference>
<dbReference type="FunFam" id="3.40.50.10860:FF:000005">
    <property type="entry name" value="C-1-tetrahydrofolate synthase, cytoplasmic, putative"/>
    <property type="match status" value="1"/>
</dbReference>
<dbReference type="Gene3D" id="3.40.50.10860">
    <property type="entry name" value="Leucine Dehydrogenase, chain A, domain 1"/>
    <property type="match status" value="1"/>
</dbReference>
<dbReference type="Gene3D" id="3.40.50.720">
    <property type="entry name" value="NAD(P)-binding Rossmann-like Domain"/>
    <property type="match status" value="1"/>
</dbReference>
<dbReference type="HAMAP" id="MF_01576">
    <property type="entry name" value="THF_DHG_CYH"/>
    <property type="match status" value="1"/>
</dbReference>
<dbReference type="InterPro" id="IPR046346">
    <property type="entry name" value="Aminoacid_DH-like_N_sf"/>
</dbReference>
<dbReference type="InterPro" id="IPR036291">
    <property type="entry name" value="NAD(P)-bd_dom_sf"/>
</dbReference>
<dbReference type="InterPro" id="IPR000672">
    <property type="entry name" value="THF_DH/CycHdrlase"/>
</dbReference>
<dbReference type="InterPro" id="IPR020630">
    <property type="entry name" value="THF_DH/CycHdrlase_cat_dom"/>
</dbReference>
<dbReference type="InterPro" id="IPR020867">
    <property type="entry name" value="THF_DH/CycHdrlase_CS"/>
</dbReference>
<dbReference type="InterPro" id="IPR020631">
    <property type="entry name" value="THF_DH/CycHdrlase_NAD-bd_dom"/>
</dbReference>
<dbReference type="NCBIfam" id="NF008058">
    <property type="entry name" value="PRK10792.1"/>
    <property type="match status" value="1"/>
</dbReference>
<dbReference type="NCBIfam" id="NF010783">
    <property type="entry name" value="PRK14186.1"/>
    <property type="match status" value="1"/>
</dbReference>
<dbReference type="NCBIfam" id="NF010786">
    <property type="entry name" value="PRK14189.1"/>
    <property type="match status" value="1"/>
</dbReference>
<dbReference type="PANTHER" id="PTHR48099:SF5">
    <property type="entry name" value="C-1-TETRAHYDROFOLATE SYNTHASE, CYTOPLASMIC"/>
    <property type="match status" value="1"/>
</dbReference>
<dbReference type="PANTHER" id="PTHR48099">
    <property type="entry name" value="C-1-TETRAHYDROFOLATE SYNTHASE, CYTOPLASMIC-RELATED"/>
    <property type="match status" value="1"/>
</dbReference>
<dbReference type="Pfam" id="PF00763">
    <property type="entry name" value="THF_DHG_CYH"/>
    <property type="match status" value="1"/>
</dbReference>
<dbReference type="Pfam" id="PF02882">
    <property type="entry name" value="THF_DHG_CYH_C"/>
    <property type="match status" value="1"/>
</dbReference>
<dbReference type="PRINTS" id="PR00085">
    <property type="entry name" value="THFDHDRGNASE"/>
</dbReference>
<dbReference type="SUPFAM" id="SSF53223">
    <property type="entry name" value="Aminoacid dehydrogenase-like, N-terminal domain"/>
    <property type="match status" value="1"/>
</dbReference>
<dbReference type="SUPFAM" id="SSF51735">
    <property type="entry name" value="NAD(P)-binding Rossmann-fold domains"/>
    <property type="match status" value="1"/>
</dbReference>
<dbReference type="PROSITE" id="PS00766">
    <property type="entry name" value="THF_DHG_CYH_1"/>
    <property type="match status" value="1"/>
</dbReference>
<dbReference type="PROSITE" id="PS00767">
    <property type="entry name" value="THF_DHG_CYH_2"/>
    <property type="match status" value="1"/>
</dbReference>